<protein>
    <recommendedName>
        <fullName evidence="4">Glutamate [NMDA] receptor subunit 1</fullName>
    </recommendedName>
</protein>
<gene>
    <name evidence="4" type="primary">Nmdar1</name>
    <name type="ORF">GG10981</name>
</gene>
<comment type="function">
    <text evidence="2 4">NMDA receptor subtype of glutamate-gated ion channels with high calcium permeability and voltage-dependent sensitivity to magnesium. Mediated by glycine. This protein plays a key role in synaptic plasticity, synaptogenesis, excitotoxicity, memory acquisition and learning. It mediates neuronal functions in glutamate neurotransmission. Is involved in the cell surface targeting of NMDA receptors. Plays a role in associative learning and in long-term memory consolidation (By similarity).</text>
</comment>
<comment type="subunit">
    <text evidence="1">Forms a heteromeric NMDA channel with Nmdar2.</text>
</comment>
<comment type="subcellular location">
    <subcellularLocation>
        <location evidence="4">Cell membrane</location>
        <topology evidence="4">Multi-pass membrane protein</topology>
    </subcellularLocation>
    <subcellularLocation>
        <location evidence="4">Postsynaptic cell membrane</location>
    </subcellularLocation>
    <subcellularLocation>
        <location evidence="4">Postsynaptic density</location>
    </subcellularLocation>
</comment>
<comment type="similarity">
    <text evidence="7">Belongs to the glutamate-gated ion channel (TC 1.A.10.1) family.</text>
</comment>
<evidence type="ECO:0000250" key="1"/>
<evidence type="ECO:0000250" key="2">
    <source>
        <dbReference type="UniProtKB" id="P35439"/>
    </source>
</evidence>
<evidence type="ECO:0000250" key="3">
    <source>
        <dbReference type="UniProtKB" id="Q05586"/>
    </source>
</evidence>
<evidence type="ECO:0000250" key="4">
    <source>
        <dbReference type="UniProtKB" id="Q24418"/>
    </source>
</evidence>
<evidence type="ECO:0000255" key="5"/>
<evidence type="ECO:0000256" key="6">
    <source>
        <dbReference type="SAM" id="MobiDB-lite"/>
    </source>
</evidence>
<evidence type="ECO:0000305" key="7"/>
<evidence type="ECO:0000312" key="8">
    <source>
        <dbReference type="EMBL" id="EDV47895.1"/>
    </source>
</evidence>
<feature type="signal peptide" evidence="5">
    <location>
        <begin position="1"/>
        <end position="26"/>
    </location>
</feature>
<feature type="chain" id="PRO_0000363994" description="Glutamate [NMDA] receptor subunit 1" evidence="5">
    <location>
        <begin position="27"/>
        <end position="997"/>
    </location>
</feature>
<feature type="topological domain" description="Extracellular" evidence="5">
    <location>
        <begin position="27"/>
        <end position="573"/>
    </location>
</feature>
<feature type="transmembrane region" description="Helical" evidence="5">
    <location>
        <begin position="574"/>
        <end position="594"/>
    </location>
</feature>
<feature type="topological domain" description="Cytoplasmic" evidence="5">
    <location>
        <begin position="595"/>
        <end position="651"/>
    </location>
</feature>
<feature type="transmembrane region" description="Helical" evidence="5">
    <location>
        <begin position="652"/>
        <end position="672"/>
    </location>
</feature>
<feature type="topological domain" description="Extracellular" evidence="5">
    <location>
        <begin position="673"/>
        <end position="831"/>
    </location>
</feature>
<feature type="transmembrane region" description="Helical" evidence="5">
    <location>
        <begin position="832"/>
        <end position="852"/>
    </location>
</feature>
<feature type="topological domain" description="Cytoplasmic" evidence="5">
    <location>
        <begin position="853"/>
        <end position="997"/>
    </location>
</feature>
<feature type="region of interest" description="Disordered" evidence="6">
    <location>
        <begin position="947"/>
        <end position="997"/>
    </location>
</feature>
<feature type="compositionally biased region" description="Polar residues" evidence="6">
    <location>
        <begin position="987"/>
        <end position="997"/>
    </location>
</feature>
<feature type="binding site" evidence="2">
    <location>
        <begin position="530"/>
        <end position="532"/>
    </location>
    <ligand>
        <name>glycine</name>
        <dbReference type="ChEBI" id="CHEBI:57305"/>
    </ligand>
</feature>
<feature type="binding site" evidence="2">
    <location>
        <position position="537"/>
    </location>
    <ligand>
        <name>glycine</name>
        <dbReference type="ChEBI" id="CHEBI:57305"/>
    </ligand>
</feature>
<feature type="binding site" evidence="2">
    <location>
        <position position="703"/>
    </location>
    <ligand>
        <name>glycine</name>
        <dbReference type="ChEBI" id="CHEBI:57305"/>
    </ligand>
</feature>
<feature type="binding site" evidence="2">
    <location>
        <position position="747"/>
    </location>
    <ligand>
        <name>glycine</name>
        <dbReference type="ChEBI" id="CHEBI:57305"/>
    </ligand>
</feature>
<feature type="glycosylation site" description="N-linked (GlcNAc...) asparagine" evidence="5">
    <location>
        <position position="258"/>
    </location>
</feature>
<feature type="glycosylation site" description="N-linked (GlcNAc...) asparagine" evidence="5">
    <location>
        <position position="314"/>
    </location>
</feature>
<feature type="glycosylation site" description="N-linked (GlcNAc...) asparagine" evidence="5">
    <location>
        <position position="345"/>
    </location>
</feature>
<feature type="glycosylation site" description="N-linked (GlcNAc...) asparagine" evidence="5">
    <location>
        <position position="397"/>
    </location>
</feature>
<feature type="glycosylation site" description="N-linked (GlcNAc...) asparagine" evidence="5">
    <location>
        <position position="454"/>
    </location>
</feature>
<feature type="glycosylation site" description="N-linked (GlcNAc...) asparagine" evidence="5">
    <location>
        <position position="481"/>
    </location>
</feature>
<feature type="glycosylation site" description="N-linked (GlcNAc...) asparagine" evidence="5">
    <location>
        <position position="501"/>
    </location>
</feature>
<feature type="glycosylation site" description="N-linked (GlcNAc...) asparagine" evidence="5">
    <location>
        <position position="693"/>
    </location>
</feature>
<feature type="disulfide bond" description="Interchain" evidence="3">
    <location>
        <position position="93"/>
    </location>
</feature>
<dbReference type="EMBL" id="CH954181">
    <property type="protein sequence ID" value="EDV47895.1"/>
    <property type="molecule type" value="Genomic_DNA"/>
</dbReference>
<dbReference type="RefSeq" id="XP_001978937.1">
    <property type="nucleotide sequence ID" value="XM_001978901.2"/>
</dbReference>
<dbReference type="SMR" id="B3P2E5"/>
<dbReference type="GlyCosmos" id="B3P2E5">
    <property type="glycosylation" value="8 sites, No reported glycans"/>
</dbReference>
<dbReference type="EnsemblMetazoa" id="FBtr0131035">
    <property type="protein sequence ID" value="FBpp0129527"/>
    <property type="gene ID" value="FBgn0103284"/>
</dbReference>
<dbReference type="EnsemblMetazoa" id="FBtr0412075">
    <property type="protein sequence ID" value="FBpp0370432"/>
    <property type="gene ID" value="FBgn0103284"/>
</dbReference>
<dbReference type="EnsemblMetazoa" id="XM_015153986.2">
    <property type="protein sequence ID" value="XP_015009472.1"/>
    <property type="gene ID" value="LOC6552207"/>
</dbReference>
<dbReference type="GeneID" id="6552207"/>
<dbReference type="KEGG" id="der:6552207"/>
<dbReference type="CTD" id="40665"/>
<dbReference type="eggNOG" id="KOG4440">
    <property type="taxonomic scope" value="Eukaryota"/>
</dbReference>
<dbReference type="HOGENOM" id="CLU_007257_2_0_1"/>
<dbReference type="OMA" id="FANNTPD"/>
<dbReference type="OrthoDB" id="5984008at2759"/>
<dbReference type="PhylomeDB" id="B3P2E5"/>
<dbReference type="Proteomes" id="UP000008711">
    <property type="component" value="Unassembled WGS sequence"/>
</dbReference>
<dbReference type="GO" id="GO:0017146">
    <property type="term" value="C:NMDA selective glutamate receptor complex"/>
    <property type="evidence" value="ECO:0000250"/>
    <property type="project" value="UniProtKB"/>
</dbReference>
<dbReference type="GO" id="GO:0014069">
    <property type="term" value="C:postsynaptic density"/>
    <property type="evidence" value="ECO:0007669"/>
    <property type="project" value="UniProtKB-SubCell"/>
</dbReference>
<dbReference type="GO" id="GO:0045211">
    <property type="term" value="C:postsynaptic membrane"/>
    <property type="evidence" value="ECO:0000250"/>
    <property type="project" value="UniProtKB"/>
</dbReference>
<dbReference type="GO" id="GO:0004970">
    <property type="term" value="F:glutamate-gated receptor activity"/>
    <property type="evidence" value="ECO:0000250"/>
    <property type="project" value="UniProtKB"/>
</dbReference>
<dbReference type="GO" id="GO:0004972">
    <property type="term" value="F:NMDA glutamate receptor activity"/>
    <property type="evidence" value="ECO:0007669"/>
    <property type="project" value="EnsemblMetazoa"/>
</dbReference>
<dbReference type="GO" id="GO:0048149">
    <property type="term" value="P:behavioral response to ethanol"/>
    <property type="evidence" value="ECO:0007669"/>
    <property type="project" value="EnsemblMetazoa"/>
</dbReference>
<dbReference type="GO" id="GO:0055074">
    <property type="term" value="P:calcium ion homeostasis"/>
    <property type="evidence" value="ECO:0000250"/>
    <property type="project" value="UniProtKB"/>
</dbReference>
<dbReference type="GO" id="GO:0007268">
    <property type="term" value="P:chemical synaptic transmission"/>
    <property type="evidence" value="ECO:0000250"/>
    <property type="project" value="UniProtKB"/>
</dbReference>
<dbReference type="GO" id="GO:0035235">
    <property type="term" value="P:ionotropic glutamate receptor signaling pathway"/>
    <property type="evidence" value="ECO:0000250"/>
    <property type="project" value="UniProtKB"/>
</dbReference>
<dbReference type="GO" id="GO:0007616">
    <property type="term" value="P:long-term memory"/>
    <property type="evidence" value="ECO:0000250"/>
    <property type="project" value="UniProtKB"/>
</dbReference>
<dbReference type="GO" id="GO:0072375">
    <property type="term" value="P:medium-term memory"/>
    <property type="evidence" value="ECO:0007669"/>
    <property type="project" value="EnsemblMetazoa"/>
</dbReference>
<dbReference type="GO" id="GO:0008355">
    <property type="term" value="P:olfactory learning"/>
    <property type="evidence" value="ECO:0000250"/>
    <property type="project" value="UniProtKB"/>
</dbReference>
<dbReference type="GO" id="GO:0042331">
    <property type="term" value="P:phototaxis"/>
    <property type="evidence" value="ECO:0007669"/>
    <property type="project" value="EnsemblMetazoa"/>
</dbReference>
<dbReference type="GO" id="GO:0042391">
    <property type="term" value="P:regulation of membrane potential"/>
    <property type="evidence" value="ECO:0000250"/>
    <property type="project" value="UniProtKB"/>
</dbReference>
<dbReference type="GO" id="GO:0050975">
    <property type="term" value="P:sensory perception of touch"/>
    <property type="evidence" value="ECO:0007669"/>
    <property type="project" value="EnsemblMetazoa"/>
</dbReference>
<dbReference type="CDD" id="cd06379">
    <property type="entry name" value="PBP1_iGluR_NMDA_NR1"/>
    <property type="match status" value="1"/>
</dbReference>
<dbReference type="CDD" id="cd13719">
    <property type="entry name" value="PBP2_iGluR_NMDA_Nr1"/>
    <property type="match status" value="1"/>
</dbReference>
<dbReference type="FunFam" id="3.40.190.10:FF:000177">
    <property type="entry name" value="Glutamate [NMDA] receptor subunit 1"/>
    <property type="match status" value="1"/>
</dbReference>
<dbReference type="FunFam" id="3.40.50.2300:FF:000266">
    <property type="entry name" value="Glutamate [NMDA] receptor subunit 1"/>
    <property type="match status" value="1"/>
</dbReference>
<dbReference type="FunFam" id="3.40.190.10:FF:000010">
    <property type="entry name" value="glutamate receptor ionotropic, NMDA 1 isoform X1"/>
    <property type="match status" value="1"/>
</dbReference>
<dbReference type="FunFam" id="3.40.50.2300:FF:000025">
    <property type="entry name" value="glutamate receptor ionotropic, NMDA 1 isoform X1"/>
    <property type="match status" value="1"/>
</dbReference>
<dbReference type="Gene3D" id="3.40.50.2300">
    <property type="match status" value="2"/>
</dbReference>
<dbReference type="Gene3D" id="3.40.190.10">
    <property type="entry name" value="Periplasmic binding protein-like II"/>
    <property type="match status" value="3"/>
</dbReference>
<dbReference type="InterPro" id="IPR001828">
    <property type="entry name" value="ANF_lig-bd_rcpt"/>
</dbReference>
<dbReference type="InterPro" id="IPR018882">
    <property type="entry name" value="CaM-bd_C0_NMDA_rcpt_NR1"/>
</dbReference>
<dbReference type="InterPro" id="IPR019594">
    <property type="entry name" value="Glu/Gly-bd"/>
</dbReference>
<dbReference type="InterPro" id="IPR001508">
    <property type="entry name" value="Iono_Glu_rcpt_met"/>
</dbReference>
<dbReference type="InterPro" id="IPR015683">
    <property type="entry name" value="Ionotropic_Glu_rcpt"/>
</dbReference>
<dbReference type="InterPro" id="IPR001320">
    <property type="entry name" value="Iontro_rcpt_C"/>
</dbReference>
<dbReference type="InterPro" id="IPR049872">
    <property type="entry name" value="NMDA1-like_ligand-bd"/>
</dbReference>
<dbReference type="InterPro" id="IPR049873">
    <property type="entry name" value="NMDA1-like_N"/>
</dbReference>
<dbReference type="InterPro" id="IPR028082">
    <property type="entry name" value="Peripla_BP_I"/>
</dbReference>
<dbReference type="PANTHER" id="PTHR18966">
    <property type="entry name" value="IONOTROPIC GLUTAMATE RECEPTOR"/>
    <property type="match status" value="1"/>
</dbReference>
<dbReference type="Pfam" id="PF01094">
    <property type="entry name" value="ANF_receptor"/>
    <property type="match status" value="1"/>
</dbReference>
<dbReference type="Pfam" id="PF10562">
    <property type="entry name" value="CaM_bdg_C0"/>
    <property type="match status" value="1"/>
</dbReference>
<dbReference type="Pfam" id="PF00060">
    <property type="entry name" value="Lig_chan"/>
    <property type="match status" value="1"/>
</dbReference>
<dbReference type="Pfam" id="PF10613">
    <property type="entry name" value="Lig_chan-Glu_bd"/>
    <property type="match status" value="1"/>
</dbReference>
<dbReference type="PRINTS" id="PR00177">
    <property type="entry name" value="NMDARECEPTOR"/>
</dbReference>
<dbReference type="SMART" id="SM00918">
    <property type="entry name" value="Lig_chan-Glu_bd"/>
    <property type="match status" value="1"/>
</dbReference>
<dbReference type="SMART" id="SM00079">
    <property type="entry name" value="PBPe"/>
    <property type="match status" value="1"/>
</dbReference>
<dbReference type="SUPFAM" id="SSF53822">
    <property type="entry name" value="Periplasmic binding protein-like I"/>
    <property type="match status" value="1"/>
</dbReference>
<dbReference type="SUPFAM" id="SSF53850">
    <property type="entry name" value="Periplasmic binding protein-like II"/>
    <property type="match status" value="1"/>
</dbReference>
<dbReference type="SUPFAM" id="SSF81324">
    <property type="entry name" value="Voltage-gated potassium channels"/>
    <property type="match status" value="1"/>
</dbReference>
<keyword id="KW-0106">Calcium</keyword>
<keyword id="KW-1003">Cell membrane</keyword>
<keyword id="KW-1015">Disulfide bond</keyword>
<keyword id="KW-0325">Glycoprotein</keyword>
<keyword id="KW-0407">Ion channel</keyword>
<keyword id="KW-0406">Ion transport</keyword>
<keyword id="KW-1071">Ligand-gated ion channel</keyword>
<keyword id="KW-0460">Magnesium</keyword>
<keyword id="KW-0472">Membrane</keyword>
<keyword id="KW-0597">Phosphoprotein</keyword>
<keyword id="KW-0628">Postsynaptic cell membrane</keyword>
<keyword id="KW-0675">Receptor</keyword>
<keyword id="KW-0732">Signal</keyword>
<keyword id="KW-0770">Synapse</keyword>
<keyword id="KW-0812">Transmembrane</keyword>
<keyword id="KW-1133">Transmembrane helix</keyword>
<keyword id="KW-0813">Transport</keyword>
<sequence>MAVAEFVFCWPLFELAIVLLVAPIHAAQRHTASDNPSTYNIGGVLSNSDSEEHFSTTIKHLNFDQQYVPRKVTYYDKTIRMDKNPIKTVFNVCDKLIENRVYAVVVSHEQTSGDLSPAAVSYTSGFYSIPVIGISSRDAAFSDKNIHVSFLRTVPPYYHQADVWLEMLSHFAYTKVIIIHSSDTDGRAILGRFQTTSQTYYDDVDVRATVELIVEFEPKLESFTEHLIDMKTAQSRVYLMYASTEDAQVIFRDAGEYNMTGEGHVWIVTEQALFSNNTPDGVLGLQLEHAHSDKGHIRDSVYVLASAIKEMISNETIAEAPKDCGDSAVNWESGKRLFQYLKSRNITGETGQVAFDDNGDRIYAGYDVINIREQQKKHVVGKFSYDSMRAKMRMRINDSEIIWPGKQRRKPEGIMIPTHLKLLTIEEKPFVYVRRMGDDEFRCEPDERPCPLFNNSDATANEFCCRGYCIDLLIELSKRINFTYDLALSPDGQFGHYILRNSTGAMTLRKEWTGLIGELVNERADMIVAPLTINPERAEYIEFSKPFKYQGITILEKKPSRSSTLVSFLQPFSNTLWILVMVSVHVVALVLYLLDRFSPFGRFKLSHSDSNEEKALNLSSAVWFAWGVLLNSGIGEGTPRSFSARVLGMVWAGFAMIIVASYTANLAAFLVLERPKTKLSGINDARLRNTMENLTCATVKGSSVDMYFRRQVELSNMYRTMEANNYATAEQAIQDVKKGKLMAFIWDSSRLEYEASKDCELVTAGELFGRSGYGIGLQKGSPWTDAVTLAILEFHESGFMEKLDKQWIFHGHVQQNCELFEKTPNTLGLKNMAGVFILVGVGIAGGVGLIIIEVIYKKHQVKKQKRLDIARHAADKWRGTIEKRKTIRASLAMQRQYNVGLNSTHAPGTISLAVDKRRYPRLGQRLGPERAWPGDAADVLRIRRPYELGKPGQSPKVMSANQPGMPMPMLGKTRPQQSVLPPRYSPGYTSDVSHLVV</sequence>
<accession>B3P2E5</accession>
<name>NMDA1_DROER</name>
<reference evidence="8" key="1">
    <citation type="journal article" date="2007" name="Nature">
        <title>Evolution of genes and genomes on the Drosophila phylogeny.</title>
        <authorList>
            <consortium name="Drosophila 12 genomes consortium"/>
        </authorList>
    </citation>
    <scope>NUCLEOTIDE SEQUENCE [LARGE SCALE GENOMIC DNA]</scope>
    <source>
        <strain evidence="8">Tucson 14021-0224.01</strain>
    </source>
</reference>
<proteinExistence type="inferred from homology"/>
<organism>
    <name type="scientific">Drosophila erecta</name>
    <name type="common">Fruit fly</name>
    <dbReference type="NCBI Taxonomy" id="7220"/>
    <lineage>
        <taxon>Eukaryota</taxon>
        <taxon>Metazoa</taxon>
        <taxon>Ecdysozoa</taxon>
        <taxon>Arthropoda</taxon>
        <taxon>Hexapoda</taxon>
        <taxon>Insecta</taxon>
        <taxon>Pterygota</taxon>
        <taxon>Neoptera</taxon>
        <taxon>Endopterygota</taxon>
        <taxon>Diptera</taxon>
        <taxon>Brachycera</taxon>
        <taxon>Muscomorpha</taxon>
        <taxon>Ephydroidea</taxon>
        <taxon>Drosophilidae</taxon>
        <taxon>Drosophila</taxon>
        <taxon>Sophophora</taxon>
    </lineage>
</organism>